<dbReference type="SMR" id="P86751"/>
<dbReference type="iPTMnet" id="P86751"/>
<dbReference type="GO" id="GO:0005737">
    <property type="term" value="C:cytoplasm"/>
    <property type="evidence" value="ECO:0007669"/>
    <property type="project" value="TreeGrafter"/>
</dbReference>
<dbReference type="GO" id="GO:0005509">
    <property type="term" value="F:calcium ion binding"/>
    <property type="evidence" value="ECO:0007669"/>
    <property type="project" value="InterPro"/>
</dbReference>
<dbReference type="Gene3D" id="1.10.238.10">
    <property type="entry name" value="EF-hand"/>
    <property type="match status" value="1"/>
</dbReference>
<dbReference type="InterPro" id="IPR011992">
    <property type="entry name" value="EF-hand-dom_pair"/>
</dbReference>
<dbReference type="InterPro" id="IPR018247">
    <property type="entry name" value="EF_Hand_1_Ca_BS"/>
</dbReference>
<dbReference type="InterPro" id="IPR002048">
    <property type="entry name" value="EF_hand_dom"/>
</dbReference>
<dbReference type="InterPro" id="IPR008080">
    <property type="entry name" value="Parvalbumin"/>
</dbReference>
<dbReference type="PANTHER" id="PTHR11653:SF12">
    <property type="entry name" value="PARVALBUMIN"/>
    <property type="match status" value="1"/>
</dbReference>
<dbReference type="PANTHER" id="PTHR11653">
    <property type="entry name" value="PARVALBUMIN ALPHA"/>
    <property type="match status" value="1"/>
</dbReference>
<dbReference type="Pfam" id="PF00036">
    <property type="entry name" value="EF-hand_1"/>
    <property type="match status" value="1"/>
</dbReference>
<dbReference type="PRINTS" id="PR01697">
    <property type="entry name" value="PARVALBUMIN"/>
</dbReference>
<dbReference type="SMART" id="SM00054">
    <property type="entry name" value="EFh"/>
    <property type="match status" value="1"/>
</dbReference>
<dbReference type="SUPFAM" id="SSF47473">
    <property type="entry name" value="EF-hand"/>
    <property type="match status" value="1"/>
</dbReference>
<dbReference type="PROSITE" id="PS00018">
    <property type="entry name" value="EF_HAND_1"/>
    <property type="match status" value="1"/>
</dbReference>
<dbReference type="PROSITE" id="PS50222">
    <property type="entry name" value="EF_HAND_2"/>
    <property type="match status" value="1"/>
</dbReference>
<sequence>AFAGVLADADIKAALAGCAAADSFNYKTFFKSPEEVKKFFAIIDQDHSGFIEEEELKLFLQTFSAGARALSDAETK</sequence>
<accession>P86751</accession>
<comment type="function">
    <text evidence="2 3">In muscle, parvalbumin is thought to be involved in relaxation after contraction. It binds two calcium ions (By similarity).</text>
</comment>
<comment type="miscellaneous">
    <text evidence="2 6">Is regarded as an important allergen.</text>
</comment>
<comment type="miscellaneous">
    <text evidence="6">On the 2D-gel the determined pI of this protein is: 3.98, its MW is: 11.33 kDa.</text>
</comment>
<comment type="similarity">
    <text evidence="4">Belongs to the parvalbumin family.</text>
</comment>
<feature type="chain" id="PRO_0000399411" description="Parvalbumin beta 3">
    <location>
        <begin position="1"/>
        <end position="76" status="greater than"/>
    </location>
</feature>
<feature type="domain" description="EF-hand" evidence="5">
    <location>
        <begin position="31"/>
        <end position="66"/>
    </location>
</feature>
<feature type="binding site" evidence="5">
    <location>
        <position position="44"/>
    </location>
    <ligand>
        <name>Ca(2+)</name>
        <dbReference type="ChEBI" id="CHEBI:29108"/>
        <label>1</label>
    </ligand>
</feature>
<feature type="binding site" evidence="5">
    <location>
        <position position="46"/>
    </location>
    <ligand>
        <name>Ca(2+)</name>
        <dbReference type="ChEBI" id="CHEBI:29108"/>
        <label>1</label>
    </ligand>
</feature>
<feature type="binding site" evidence="5">
    <location>
        <position position="48"/>
    </location>
    <ligand>
        <name>Ca(2+)</name>
        <dbReference type="ChEBI" id="CHEBI:29108"/>
        <label>1</label>
    </ligand>
</feature>
<feature type="binding site" evidence="1">
    <location>
        <position position="50"/>
    </location>
    <ligand>
        <name>Ca(2+)</name>
        <dbReference type="ChEBI" id="CHEBI:29108"/>
        <label>1</label>
    </ligand>
</feature>
<feature type="binding site" evidence="1">
    <location>
        <position position="52"/>
    </location>
    <ligand>
        <name>Ca(2+)</name>
        <dbReference type="ChEBI" id="CHEBI:29108"/>
        <label>1</label>
    </ligand>
</feature>
<feature type="binding site" evidence="5">
    <location>
        <position position="55"/>
    </location>
    <ligand>
        <name>Ca(2+)</name>
        <dbReference type="ChEBI" id="CHEBI:29108"/>
        <label>1</label>
    </ligand>
</feature>
<feature type="modified residue" description="N-acetylalanine" evidence="6">
    <location>
        <position position="1"/>
    </location>
</feature>
<feature type="unsure residue" description="L or I" evidence="6">
    <location>
        <position position="6"/>
    </location>
</feature>
<feature type="unsure residue" description="I or L" evidence="6">
    <location>
        <position position="11"/>
    </location>
</feature>
<feature type="unsure residue" description="K or Q" evidence="6">
    <location>
        <position position="12"/>
    </location>
</feature>
<feature type="unsure residue" description="L or I" evidence="6">
    <location>
        <position position="15"/>
    </location>
</feature>
<feature type="unsure residue" description="K or Q" evidence="6">
    <location>
        <position position="27"/>
    </location>
</feature>
<feature type="unsure residue" description="K or Q" evidence="6">
    <location>
        <position position="31"/>
    </location>
</feature>
<feature type="unsure residue" description="K or Q" evidence="6">
    <location>
        <position position="37"/>
    </location>
</feature>
<feature type="unsure residue" description="K or Q" evidence="6">
    <location>
        <position position="38"/>
    </location>
</feature>
<feature type="unsure residue" description="I or L" evidence="6">
    <location>
        <position position="42"/>
    </location>
</feature>
<feature type="unsure residue" description="I or L" evidence="6">
    <location>
        <position position="43"/>
    </location>
</feature>
<feature type="unsure residue" description="Q or K" evidence="6">
    <location>
        <position position="45"/>
    </location>
</feature>
<feature type="unsure residue" description="I or L" evidence="6">
    <location>
        <position position="51"/>
    </location>
</feature>
<feature type="unsure residue" description="L or I" evidence="6">
    <location>
        <position position="56"/>
    </location>
</feature>
<feature type="unsure residue" description="K or Q" evidence="6">
    <location>
        <position position="57"/>
    </location>
</feature>
<feature type="unsure residue" description="L or I" evidence="6">
    <location>
        <position position="58"/>
    </location>
</feature>
<feature type="unsure residue" description="L or I" evidence="6">
    <location>
        <position position="60"/>
    </location>
</feature>
<feature type="unsure residue" description="Q or K" evidence="6">
    <location>
        <position position="61"/>
    </location>
</feature>
<feature type="unsure residue" description="L or I" evidence="6">
    <location>
        <position position="70"/>
    </location>
</feature>
<feature type="unsure residue" description="K or Q" evidence="6">
    <location>
        <position position="76"/>
    </location>
</feature>
<feature type="non-consecutive residues" evidence="7">
    <location>
        <begin position="31"/>
        <end position="32"/>
    </location>
</feature>
<feature type="non-terminal residue" evidence="7">
    <location>
        <position position="76"/>
    </location>
</feature>
<name>PRVB3_MERPL</name>
<protein>
    <recommendedName>
        <fullName evidence="7">Parvalbumin beta 3</fullName>
    </recommendedName>
</protein>
<proteinExistence type="evidence at protein level"/>
<organism>
    <name type="scientific">Merluccius polylepis</name>
    <name type="common">Southern hake</name>
    <name type="synonym">Merluccius australis polylepis</name>
    <dbReference type="NCBI Taxonomy" id="2705414"/>
    <lineage>
        <taxon>Eukaryota</taxon>
        <taxon>Metazoa</taxon>
        <taxon>Chordata</taxon>
        <taxon>Craniata</taxon>
        <taxon>Vertebrata</taxon>
        <taxon>Euteleostomi</taxon>
        <taxon>Actinopterygii</taxon>
        <taxon>Neopterygii</taxon>
        <taxon>Teleostei</taxon>
        <taxon>Neoteleostei</taxon>
        <taxon>Acanthomorphata</taxon>
        <taxon>Zeiogadaria</taxon>
        <taxon>Gadariae</taxon>
        <taxon>Gadiformes</taxon>
        <taxon>Gadoidei</taxon>
        <taxon>Merlucciidae</taxon>
        <taxon>Merluccius</taxon>
    </lineage>
</organism>
<evidence type="ECO:0000250" key="1">
    <source>
        <dbReference type="UniProtKB" id="P02621"/>
    </source>
</evidence>
<evidence type="ECO:0000250" key="2">
    <source>
        <dbReference type="UniProtKB" id="P02622"/>
    </source>
</evidence>
<evidence type="ECO:0000250" key="3">
    <source>
        <dbReference type="UniProtKB" id="P02624"/>
    </source>
</evidence>
<evidence type="ECO:0000255" key="4"/>
<evidence type="ECO:0000255" key="5">
    <source>
        <dbReference type="PROSITE-ProRule" id="PRU00448"/>
    </source>
</evidence>
<evidence type="ECO:0000269" key="6">
    <source>
    </source>
</evidence>
<evidence type="ECO:0000303" key="7">
    <source>
    </source>
</evidence>
<evidence type="ECO:0000305" key="8"/>
<keyword id="KW-0007">Acetylation</keyword>
<keyword id="KW-0020">Allergen</keyword>
<keyword id="KW-0106">Calcium</keyword>
<keyword id="KW-0903">Direct protein sequencing</keyword>
<keyword id="KW-0479">Metal-binding</keyword>
<keyword id="KW-0514">Muscle protein</keyword>
<reference evidence="8" key="1">
    <citation type="journal article" date="2010" name="J. Proteome Res.">
        <title>Extensive de novo sequencing of new parvalbumin isoforms using a novel combination of bottom-up proteomics, accurate molecular mass measurement by FTICR-MS, and selected MS/MS ion monitoring.</title>
        <authorList>
            <person name="Carrera M."/>
            <person name="Canas B."/>
            <person name="Vazquez J."/>
            <person name="Gallardo J.M."/>
        </authorList>
    </citation>
    <scope>PROTEIN SEQUENCE</scope>
    <scope>ACETYLATION AT ALA-1</scope>
    <source>
        <tissue evidence="6">Muscle</tissue>
    </source>
</reference>